<reference key="1">
    <citation type="journal article" date="2009" name="Proc. Natl. Acad. Sci. U.S.A.">
        <title>Biogeography of the Sulfolobus islandicus pan-genome.</title>
        <authorList>
            <person name="Reno M.L."/>
            <person name="Held N.L."/>
            <person name="Fields C.J."/>
            <person name="Burke P.V."/>
            <person name="Whitaker R.J."/>
        </authorList>
    </citation>
    <scope>NUCLEOTIDE SEQUENCE [LARGE SCALE GENOMIC DNA]</scope>
    <source>
        <strain>M.16.4 / Kamchatka #3</strain>
    </source>
</reference>
<organism>
    <name type="scientific">Saccharolobus islandicus (strain M.16.4 / Kamchatka #3)</name>
    <name type="common">Sulfolobus islandicus</name>
    <dbReference type="NCBI Taxonomy" id="426118"/>
    <lineage>
        <taxon>Archaea</taxon>
        <taxon>Thermoproteota</taxon>
        <taxon>Thermoprotei</taxon>
        <taxon>Sulfolobales</taxon>
        <taxon>Sulfolobaceae</taxon>
        <taxon>Saccharolobus</taxon>
    </lineage>
</organism>
<comment type="function">
    <text evidence="1">Catalyzes the dephosphorylation of undecaprenyl diphosphate (UPP).</text>
</comment>
<comment type="catalytic activity">
    <reaction evidence="1">
        <text>di-trans,octa-cis-undecaprenyl diphosphate + H2O = di-trans,octa-cis-undecaprenyl phosphate + phosphate + H(+)</text>
        <dbReference type="Rhea" id="RHEA:28094"/>
        <dbReference type="ChEBI" id="CHEBI:15377"/>
        <dbReference type="ChEBI" id="CHEBI:15378"/>
        <dbReference type="ChEBI" id="CHEBI:43474"/>
        <dbReference type="ChEBI" id="CHEBI:58405"/>
        <dbReference type="ChEBI" id="CHEBI:60392"/>
        <dbReference type="EC" id="3.6.1.27"/>
    </reaction>
</comment>
<comment type="subcellular location">
    <subcellularLocation>
        <location evidence="1">Cell membrane</location>
        <topology evidence="1">Multi-pass membrane protein</topology>
    </subcellularLocation>
</comment>
<comment type="similarity">
    <text evidence="1">Belongs to the UppP family.</text>
</comment>
<dbReference type="EC" id="3.6.1.27" evidence="1"/>
<dbReference type="EMBL" id="CP001402">
    <property type="protein sequence ID" value="ACR41416.1"/>
    <property type="molecule type" value="Genomic_DNA"/>
</dbReference>
<dbReference type="RefSeq" id="WP_012735727.1">
    <property type="nucleotide sequence ID" value="NC_012726.1"/>
</dbReference>
<dbReference type="SMR" id="C4KFQ2"/>
<dbReference type="GeneID" id="84061211"/>
<dbReference type="KEGG" id="sid:M164_0802"/>
<dbReference type="HOGENOM" id="CLU_060296_1_2_2"/>
<dbReference type="Proteomes" id="UP000001479">
    <property type="component" value="Chromosome"/>
</dbReference>
<dbReference type="GO" id="GO:0005886">
    <property type="term" value="C:plasma membrane"/>
    <property type="evidence" value="ECO:0007669"/>
    <property type="project" value="UniProtKB-SubCell"/>
</dbReference>
<dbReference type="GO" id="GO:0050380">
    <property type="term" value="F:undecaprenyl-diphosphatase activity"/>
    <property type="evidence" value="ECO:0007669"/>
    <property type="project" value="UniProtKB-UniRule"/>
</dbReference>
<dbReference type="HAMAP" id="MF_01006">
    <property type="entry name" value="Undec_diphosphatase"/>
    <property type="match status" value="1"/>
</dbReference>
<dbReference type="InterPro" id="IPR003824">
    <property type="entry name" value="UppP"/>
</dbReference>
<dbReference type="NCBIfam" id="NF001398">
    <property type="entry name" value="PRK00281.3-5"/>
    <property type="match status" value="1"/>
</dbReference>
<dbReference type="PANTHER" id="PTHR30622">
    <property type="entry name" value="UNDECAPRENYL-DIPHOSPHATASE"/>
    <property type="match status" value="1"/>
</dbReference>
<dbReference type="PANTHER" id="PTHR30622:SF2">
    <property type="entry name" value="UNDECAPRENYL-DIPHOSPHATASE"/>
    <property type="match status" value="1"/>
</dbReference>
<dbReference type="Pfam" id="PF02673">
    <property type="entry name" value="BacA"/>
    <property type="match status" value="1"/>
</dbReference>
<proteinExistence type="inferred from homology"/>
<gene>
    <name evidence="1" type="primary">uppP</name>
    <name type="ordered locus">M164_0802</name>
</gene>
<evidence type="ECO:0000255" key="1">
    <source>
        <dbReference type="HAMAP-Rule" id="MF_01006"/>
    </source>
</evidence>
<accession>C4KFQ2</accession>
<name>UPPP_SACI6</name>
<keyword id="KW-1003">Cell membrane</keyword>
<keyword id="KW-0378">Hydrolase</keyword>
<keyword id="KW-0472">Membrane</keyword>
<keyword id="KW-0812">Transmembrane</keyword>
<keyword id="KW-1133">Transmembrane helix</keyword>
<protein>
    <recommendedName>
        <fullName evidence="1">Undecaprenyl-diphosphatase</fullName>
        <ecNumber evidence="1">3.6.1.27</ecNumber>
    </recommendedName>
    <alternativeName>
        <fullName evidence="1">Undecaprenyl pyrophosphate phosphatase</fullName>
    </alternativeName>
</protein>
<sequence length="278" mass="29890">MDYILIGVILGIVQGISEWIPISSKTQVLIVSLSLLGLSFSVAYSFGLFMEIGTIAAAIIYFRREISGLLKALVRMSSRREDYLLLKFLVIVTIITGLMGVPLYLFVISLPILGLPMTVLGVVLLIDGIIIYLSRKNYIPRKGLHDLRLRDIIIVGIAQGLAALPGVSRSGITTSALILLGVKPEEAFKLSFISLIPAALGAIGVTVLFSKHEVSQAVHSVSLSGLLISIVVATFVSIFFINALLRFARTNKVVVLVIILGIIAIISGILSGIAKGFY</sequence>
<feature type="chain" id="PRO_1000213157" description="Undecaprenyl-diphosphatase">
    <location>
        <begin position="1"/>
        <end position="278"/>
    </location>
</feature>
<feature type="transmembrane region" description="Helical" evidence="1">
    <location>
        <begin position="3"/>
        <end position="23"/>
    </location>
</feature>
<feature type="transmembrane region" description="Helical" evidence="1">
    <location>
        <begin position="42"/>
        <end position="62"/>
    </location>
</feature>
<feature type="transmembrane region" description="Helical" evidence="1">
    <location>
        <begin position="88"/>
        <end position="108"/>
    </location>
</feature>
<feature type="transmembrane region" description="Helical" evidence="1">
    <location>
        <begin position="112"/>
        <end position="132"/>
    </location>
</feature>
<feature type="transmembrane region" description="Helical" evidence="1">
    <location>
        <begin position="152"/>
        <end position="172"/>
    </location>
</feature>
<feature type="transmembrane region" description="Helical" evidence="1">
    <location>
        <begin position="190"/>
        <end position="210"/>
    </location>
</feature>
<feature type="transmembrane region" description="Helical" evidence="1">
    <location>
        <begin position="225"/>
        <end position="245"/>
    </location>
</feature>
<feature type="transmembrane region" description="Helical" evidence="1">
    <location>
        <begin position="253"/>
        <end position="273"/>
    </location>
</feature>